<sequence length="95" mass="10198">MSVDLATVKRVAHLARIAVSEDEANRMVGELNGILGFVEQLSEVNVDGVEAMTSVTPMAMKKRTDEVTDGSKAADIVANAPVTDHNFFLVPKVVE</sequence>
<dbReference type="EC" id="6.3.5.-" evidence="1"/>
<dbReference type="EMBL" id="CP001191">
    <property type="protein sequence ID" value="ACI54811.1"/>
    <property type="molecule type" value="Genomic_DNA"/>
</dbReference>
<dbReference type="RefSeq" id="WP_003578934.1">
    <property type="nucleotide sequence ID" value="NC_011369.1"/>
</dbReference>
<dbReference type="SMR" id="B5ZMI9"/>
<dbReference type="STRING" id="395492.Rleg2_1520"/>
<dbReference type="KEGG" id="rlt:Rleg2_1520"/>
<dbReference type="eggNOG" id="COG0721">
    <property type="taxonomic scope" value="Bacteria"/>
</dbReference>
<dbReference type="HOGENOM" id="CLU_105899_2_0_5"/>
<dbReference type="Proteomes" id="UP000008330">
    <property type="component" value="Chromosome"/>
</dbReference>
<dbReference type="GO" id="GO:0050566">
    <property type="term" value="F:asparaginyl-tRNA synthase (glutamine-hydrolyzing) activity"/>
    <property type="evidence" value="ECO:0007669"/>
    <property type="project" value="RHEA"/>
</dbReference>
<dbReference type="GO" id="GO:0005524">
    <property type="term" value="F:ATP binding"/>
    <property type="evidence" value="ECO:0007669"/>
    <property type="project" value="UniProtKB-KW"/>
</dbReference>
<dbReference type="GO" id="GO:0050567">
    <property type="term" value="F:glutaminyl-tRNA synthase (glutamine-hydrolyzing) activity"/>
    <property type="evidence" value="ECO:0007669"/>
    <property type="project" value="UniProtKB-UniRule"/>
</dbReference>
<dbReference type="GO" id="GO:0070681">
    <property type="term" value="P:glutaminyl-tRNAGln biosynthesis via transamidation"/>
    <property type="evidence" value="ECO:0007669"/>
    <property type="project" value="TreeGrafter"/>
</dbReference>
<dbReference type="GO" id="GO:0006450">
    <property type="term" value="P:regulation of translational fidelity"/>
    <property type="evidence" value="ECO:0007669"/>
    <property type="project" value="InterPro"/>
</dbReference>
<dbReference type="GO" id="GO:0006412">
    <property type="term" value="P:translation"/>
    <property type="evidence" value="ECO:0007669"/>
    <property type="project" value="UniProtKB-UniRule"/>
</dbReference>
<dbReference type="Gene3D" id="1.10.20.60">
    <property type="entry name" value="Glu-tRNAGln amidotransferase C subunit, N-terminal domain"/>
    <property type="match status" value="1"/>
</dbReference>
<dbReference type="HAMAP" id="MF_00122">
    <property type="entry name" value="GatC"/>
    <property type="match status" value="1"/>
</dbReference>
<dbReference type="InterPro" id="IPR036113">
    <property type="entry name" value="Asp/Glu-ADT_sf_sub_c"/>
</dbReference>
<dbReference type="InterPro" id="IPR003837">
    <property type="entry name" value="GatC"/>
</dbReference>
<dbReference type="NCBIfam" id="TIGR00135">
    <property type="entry name" value="gatC"/>
    <property type="match status" value="1"/>
</dbReference>
<dbReference type="PANTHER" id="PTHR15004">
    <property type="entry name" value="GLUTAMYL-TRNA(GLN) AMIDOTRANSFERASE SUBUNIT C, MITOCHONDRIAL"/>
    <property type="match status" value="1"/>
</dbReference>
<dbReference type="PANTHER" id="PTHR15004:SF0">
    <property type="entry name" value="GLUTAMYL-TRNA(GLN) AMIDOTRANSFERASE SUBUNIT C, MITOCHONDRIAL"/>
    <property type="match status" value="1"/>
</dbReference>
<dbReference type="Pfam" id="PF02686">
    <property type="entry name" value="GatC"/>
    <property type="match status" value="1"/>
</dbReference>
<dbReference type="SUPFAM" id="SSF141000">
    <property type="entry name" value="Glu-tRNAGln amidotransferase C subunit"/>
    <property type="match status" value="1"/>
</dbReference>
<reference key="1">
    <citation type="journal article" date="2010" name="Stand. Genomic Sci.">
        <title>Complete genome sequence of Rhizobium leguminosarum bv trifolii strain WSM2304, an effective microsymbiont of the South American clover Trifolium polymorphum.</title>
        <authorList>
            <person name="Reeve W."/>
            <person name="O'Hara G."/>
            <person name="Chain P."/>
            <person name="Ardley J."/>
            <person name="Brau L."/>
            <person name="Nandesena K."/>
            <person name="Tiwari R."/>
            <person name="Malfatti S."/>
            <person name="Kiss H."/>
            <person name="Lapidus A."/>
            <person name="Copeland A."/>
            <person name="Nolan M."/>
            <person name="Land M."/>
            <person name="Ivanova N."/>
            <person name="Mavromatis K."/>
            <person name="Markowitz V."/>
            <person name="Kyrpides N."/>
            <person name="Melino V."/>
            <person name="Denton M."/>
            <person name="Yates R."/>
            <person name="Howieson J."/>
        </authorList>
    </citation>
    <scope>NUCLEOTIDE SEQUENCE [LARGE SCALE GENOMIC DNA]</scope>
    <source>
        <strain>WSM2304</strain>
    </source>
</reference>
<comment type="function">
    <text evidence="1">Allows the formation of correctly charged Asn-tRNA(Asn) or Gln-tRNA(Gln) through the transamidation of misacylated Asp-tRNA(Asn) or Glu-tRNA(Gln) in organisms which lack either or both of asparaginyl-tRNA or glutaminyl-tRNA synthetases. The reaction takes place in the presence of glutamine and ATP through an activated phospho-Asp-tRNA(Asn) or phospho-Glu-tRNA(Gln).</text>
</comment>
<comment type="catalytic activity">
    <reaction evidence="1">
        <text>L-glutamyl-tRNA(Gln) + L-glutamine + ATP + H2O = L-glutaminyl-tRNA(Gln) + L-glutamate + ADP + phosphate + H(+)</text>
        <dbReference type="Rhea" id="RHEA:17521"/>
        <dbReference type="Rhea" id="RHEA-COMP:9681"/>
        <dbReference type="Rhea" id="RHEA-COMP:9684"/>
        <dbReference type="ChEBI" id="CHEBI:15377"/>
        <dbReference type="ChEBI" id="CHEBI:15378"/>
        <dbReference type="ChEBI" id="CHEBI:29985"/>
        <dbReference type="ChEBI" id="CHEBI:30616"/>
        <dbReference type="ChEBI" id="CHEBI:43474"/>
        <dbReference type="ChEBI" id="CHEBI:58359"/>
        <dbReference type="ChEBI" id="CHEBI:78520"/>
        <dbReference type="ChEBI" id="CHEBI:78521"/>
        <dbReference type="ChEBI" id="CHEBI:456216"/>
    </reaction>
</comment>
<comment type="catalytic activity">
    <reaction evidence="1">
        <text>L-aspartyl-tRNA(Asn) + L-glutamine + ATP + H2O = L-asparaginyl-tRNA(Asn) + L-glutamate + ADP + phosphate + 2 H(+)</text>
        <dbReference type="Rhea" id="RHEA:14513"/>
        <dbReference type="Rhea" id="RHEA-COMP:9674"/>
        <dbReference type="Rhea" id="RHEA-COMP:9677"/>
        <dbReference type="ChEBI" id="CHEBI:15377"/>
        <dbReference type="ChEBI" id="CHEBI:15378"/>
        <dbReference type="ChEBI" id="CHEBI:29985"/>
        <dbReference type="ChEBI" id="CHEBI:30616"/>
        <dbReference type="ChEBI" id="CHEBI:43474"/>
        <dbReference type="ChEBI" id="CHEBI:58359"/>
        <dbReference type="ChEBI" id="CHEBI:78515"/>
        <dbReference type="ChEBI" id="CHEBI:78516"/>
        <dbReference type="ChEBI" id="CHEBI:456216"/>
    </reaction>
</comment>
<comment type="subunit">
    <text evidence="1">Heterotrimer of A, B and C subunits.</text>
</comment>
<comment type="similarity">
    <text evidence="1">Belongs to the GatC family.</text>
</comment>
<name>GATC_RHILW</name>
<accession>B5ZMI9</accession>
<feature type="chain" id="PRO_1000095311" description="Aspartyl/glutamyl-tRNA(Asn/Gln) amidotransferase subunit C">
    <location>
        <begin position="1"/>
        <end position="95"/>
    </location>
</feature>
<organism>
    <name type="scientific">Rhizobium leguminosarum bv. trifolii (strain WSM2304)</name>
    <dbReference type="NCBI Taxonomy" id="395492"/>
    <lineage>
        <taxon>Bacteria</taxon>
        <taxon>Pseudomonadati</taxon>
        <taxon>Pseudomonadota</taxon>
        <taxon>Alphaproteobacteria</taxon>
        <taxon>Hyphomicrobiales</taxon>
        <taxon>Rhizobiaceae</taxon>
        <taxon>Rhizobium/Agrobacterium group</taxon>
        <taxon>Rhizobium</taxon>
    </lineage>
</organism>
<evidence type="ECO:0000255" key="1">
    <source>
        <dbReference type="HAMAP-Rule" id="MF_00122"/>
    </source>
</evidence>
<proteinExistence type="inferred from homology"/>
<keyword id="KW-0067">ATP-binding</keyword>
<keyword id="KW-0436">Ligase</keyword>
<keyword id="KW-0547">Nucleotide-binding</keyword>
<keyword id="KW-0648">Protein biosynthesis</keyword>
<keyword id="KW-1185">Reference proteome</keyword>
<protein>
    <recommendedName>
        <fullName evidence="1">Aspartyl/glutamyl-tRNA(Asn/Gln) amidotransferase subunit C</fullName>
        <shortName evidence="1">Asp/Glu-ADT subunit C</shortName>
        <ecNumber evidence="1">6.3.5.-</ecNumber>
    </recommendedName>
</protein>
<gene>
    <name evidence="1" type="primary">gatC</name>
    <name type="ordered locus">Rleg2_1520</name>
</gene>